<feature type="signal peptide" evidence="1">
    <location>
        <begin position="1"/>
        <end position="24"/>
    </location>
</feature>
<feature type="chain" id="PRO_0000430983" description="Putative uncharacterized protein YDR203W">
    <location>
        <begin position="25"/>
        <end position="105"/>
    </location>
</feature>
<reference key="1">
    <citation type="journal article" date="1997" name="Nature">
        <title>The nucleotide sequence of Saccharomyces cerevisiae chromosome IV.</title>
        <authorList>
            <person name="Jacq C."/>
            <person name="Alt-Moerbe J."/>
            <person name="Andre B."/>
            <person name="Arnold W."/>
            <person name="Bahr A."/>
            <person name="Ballesta J.P.G."/>
            <person name="Bargues M."/>
            <person name="Baron L."/>
            <person name="Becker A."/>
            <person name="Biteau N."/>
            <person name="Bloecker H."/>
            <person name="Blugeon C."/>
            <person name="Boskovic J."/>
            <person name="Brandt P."/>
            <person name="Brueckner M."/>
            <person name="Buitrago M.J."/>
            <person name="Coster F."/>
            <person name="Delaveau T."/>
            <person name="del Rey F."/>
            <person name="Dujon B."/>
            <person name="Eide L.G."/>
            <person name="Garcia-Cantalejo J.M."/>
            <person name="Goffeau A."/>
            <person name="Gomez-Peris A."/>
            <person name="Granotier C."/>
            <person name="Hanemann V."/>
            <person name="Hankeln T."/>
            <person name="Hoheisel J.D."/>
            <person name="Jaeger W."/>
            <person name="Jimenez A."/>
            <person name="Jonniaux J.-L."/>
            <person name="Kraemer C."/>
            <person name="Kuester H."/>
            <person name="Laamanen P."/>
            <person name="Legros Y."/>
            <person name="Louis E.J."/>
            <person name="Moeller-Rieker S."/>
            <person name="Monnet A."/>
            <person name="Moro M."/>
            <person name="Mueller-Auer S."/>
            <person name="Nussbaumer B."/>
            <person name="Paricio N."/>
            <person name="Paulin L."/>
            <person name="Perea J."/>
            <person name="Perez-Alonso M."/>
            <person name="Perez-Ortin J.E."/>
            <person name="Pohl T.M."/>
            <person name="Prydz H."/>
            <person name="Purnelle B."/>
            <person name="Rasmussen S.W."/>
            <person name="Remacha M.A."/>
            <person name="Revuelta J.L."/>
            <person name="Rieger M."/>
            <person name="Salom D."/>
            <person name="Saluz H.P."/>
            <person name="Saiz J.E."/>
            <person name="Saren A.-M."/>
            <person name="Schaefer M."/>
            <person name="Scharfe M."/>
            <person name="Schmidt E.R."/>
            <person name="Schneider C."/>
            <person name="Scholler P."/>
            <person name="Schwarz S."/>
            <person name="Soler-Mira A."/>
            <person name="Urrestarazu L.A."/>
            <person name="Verhasselt P."/>
            <person name="Vissers S."/>
            <person name="Voet M."/>
            <person name="Volckaert G."/>
            <person name="Wagner G."/>
            <person name="Wambutt R."/>
            <person name="Wedler E."/>
            <person name="Wedler H."/>
            <person name="Woelfl S."/>
            <person name="Harris D.E."/>
            <person name="Bowman S."/>
            <person name="Brown D."/>
            <person name="Churcher C.M."/>
            <person name="Connor R."/>
            <person name="Dedman K."/>
            <person name="Gentles S."/>
            <person name="Hamlin N."/>
            <person name="Hunt S."/>
            <person name="Jones L."/>
            <person name="McDonald S."/>
            <person name="Murphy L.D."/>
            <person name="Niblett D."/>
            <person name="Odell C."/>
            <person name="Oliver K."/>
            <person name="Rajandream M.A."/>
            <person name="Richards C."/>
            <person name="Shore L."/>
            <person name="Walsh S.V."/>
            <person name="Barrell B.G."/>
            <person name="Dietrich F.S."/>
            <person name="Mulligan J.T."/>
            <person name="Allen E."/>
            <person name="Araujo R."/>
            <person name="Aviles E."/>
            <person name="Berno A."/>
            <person name="Carpenter J."/>
            <person name="Chen E."/>
            <person name="Cherry J.M."/>
            <person name="Chung E."/>
            <person name="Duncan M."/>
            <person name="Hunicke-Smith S."/>
            <person name="Hyman R.W."/>
            <person name="Komp C."/>
            <person name="Lashkari D."/>
            <person name="Lew H."/>
            <person name="Lin D."/>
            <person name="Mosedale D."/>
            <person name="Nakahara K."/>
            <person name="Namath A."/>
            <person name="Oefner P."/>
            <person name="Oh C."/>
            <person name="Petel F.X."/>
            <person name="Roberts D."/>
            <person name="Schramm S."/>
            <person name="Schroeder M."/>
            <person name="Shogren T."/>
            <person name="Shroff N."/>
            <person name="Winant A."/>
            <person name="Yelton M.A."/>
            <person name="Botstein D."/>
            <person name="Davis R.W."/>
            <person name="Johnston M."/>
            <person name="Andrews S."/>
            <person name="Brinkman R."/>
            <person name="Cooper J."/>
            <person name="Ding H."/>
            <person name="Du Z."/>
            <person name="Favello A."/>
            <person name="Fulton L."/>
            <person name="Gattung S."/>
            <person name="Greco T."/>
            <person name="Hallsworth K."/>
            <person name="Hawkins J."/>
            <person name="Hillier L.W."/>
            <person name="Jier M."/>
            <person name="Johnson D."/>
            <person name="Johnston L."/>
            <person name="Kirsten J."/>
            <person name="Kucaba T."/>
            <person name="Langston Y."/>
            <person name="Latreille P."/>
            <person name="Le T."/>
            <person name="Mardis E."/>
            <person name="Menezes S."/>
            <person name="Miller N."/>
            <person name="Nhan M."/>
            <person name="Pauley A."/>
            <person name="Peluso D."/>
            <person name="Rifkin L."/>
            <person name="Riles L."/>
            <person name="Taich A."/>
            <person name="Trevaskis E."/>
            <person name="Vignati D."/>
            <person name="Wilcox L."/>
            <person name="Wohldman P."/>
            <person name="Vaudin M."/>
            <person name="Wilson R."/>
            <person name="Waterston R."/>
            <person name="Albermann K."/>
            <person name="Hani J."/>
            <person name="Heumann K."/>
            <person name="Kleine K."/>
            <person name="Mewes H.-W."/>
            <person name="Zollner A."/>
            <person name="Zaccaria P."/>
        </authorList>
    </citation>
    <scope>NUCLEOTIDE SEQUENCE [LARGE SCALE GENOMIC DNA]</scope>
    <source>
        <strain>ATCC 204508 / S288c</strain>
    </source>
</reference>
<reference key="2">
    <citation type="journal article" date="2014" name="G3 (Bethesda)">
        <title>The reference genome sequence of Saccharomyces cerevisiae: Then and now.</title>
        <authorList>
            <person name="Engel S.R."/>
            <person name="Dietrich F.S."/>
            <person name="Fisk D.G."/>
            <person name="Binkley G."/>
            <person name="Balakrishnan R."/>
            <person name="Costanzo M.C."/>
            <person name="Dwight S.S."/>
            <person name="Hitz B.C."/>
            <person name="Karra K."/>
            <person name="Nash R.S."/>
            <person name="Weng S."/>
            <person name="Wong E.D."/>
            <person name="Lloyd P."/>
            <person name="Skrzypek M.S."/>
            <person name="Miyasato S.R."/>
            <person name="Simison M."/>
            <person name="Cherry J.M."/>
        </authorList>
    </citation>
    <scope>GENOME REANNOTATION</scope>
    <source>
        <strain>ATCC 204508 / S288c</strain>
    </source>
</reference>
<sequence length="105" mass="11607">MYWPCLVITPFTVGESFCLLLSLGIPLDTGILNIWSLSSISRHLEKLSIMLGNCGLTISSMSQEHSFTASLKLSYLSSAPNLSFGNKSTLILLFEHFHCVLDQIL</sequence>
<name>YD203_YEAST</name>
<evidence type="ECO:0000255" key="1"/>
<evidence type="ECO:0000305" key="2"/>
<evidence type="ECO:0000305" key="3">
    <source>
    </source>
</evidence>
<evidence type="ECO:0000312" key="4">
    <source>
        <dbReference type="SGD" id="S000002611"/>
    </source>
</evidence>
<proteinExistence type="uncertain"/>
<accession>A0A023PXI4</accession>
<organism>
    <name type="scientific">Saccharomyces cerevisiae (strain ATCC 204508 / S288c)</name>
    <name type="common">Baker's yeast</name>
    <dbReference type="NCBI Taxonomy" id="559292"/>
    <lineage>
        <taxon>Eukaryota</taxon>
        <taxon>Fungi</taxon>
        <taxon>Dikarya</taxon>
        <taxon>Ascomycota</taxon>
        <taxon>Saccharomycotina</taxon>
        <taxon>Saccharomycetes</taxon>
        <taxon>Saccharomycetales</taxon>
        <taxon>Saccharomycetaceae</taxon>
        <taxon>Saccharomyces</taxon>
    </lineage>
</organism>
<gene>
    <name evidence="4" type="ordered locus">YDR203W</name>
</gene>
<dbReference type="EMBL" id="KJ412222">
    <property type="protein sequence ID" value="AHX39265.1"/>
    <property type="molecule type" value="Genomic_DNA"/>
</dbReference>
<dbReference type="PIR" id="S69755">
    <property type="entry name" value="S69755"/>
</dbReference>
<dbReference type="STRING" id="4932.YDR203W"/>
<dbReference type="PaxDb" id="4932-YDR203W"/>
<dbReference type="EnsemblFungi" id="YDR203W_mRNA">
    <property type="protein sequence ID" value="YDR203W"/>
    <property type="gene ID" value="YDR203W"/>
</dbReference>
<dbReference type="AGR" id="SGD:S000002611"/>
<dbReference type="SGD" id="S000002611">
    <property type="gene designation" value="YDR203W"/>
</dbReference>
<dbReference type="HOGENOM" id="CLU_2238708_0_0_1"/>
<comment type="miscellaneous">
    <text evidence="2">Partially overlaps RAV2.</text>
</comment>
<comment type="caution">
    <text evidence="3">Product of a dubious gene prediction unlikely to encode a functional protein. Because of that it is not part of the S.cerevisiae S288c complete/reference proteome set.</text>
</comment>
<protein>
    <recommendedName>
        <fullName evidence="2">Putative uncharacterized protein YDR203W</fullName>
    </recommendedName>
</protein>
<keyword id="KW-0732">Signal</keyword>